<name>FAKD2_MOUSE</name>
<comment type="function">
    <text evidence="1">Plays an important role in assembly of the mitochondrial large ribosomal subunit. As a component of a functional protein-RNA module, consisting of RCC1L, NGRN, RPUSD3, RPUSD4, TRUB2, FASTKD2 and 16S mitochondrial ribosomal RNA (16S mt-rRNA), controls 16S mt-rRNA abundance and is required for intra-mitochondrial translation. May play a role in mitochondrial apoptosis.</text>
</comment>
<comment type="subunit">
    <text evidence="1">Monomer. Found in a complex with GRSF1, DDX28, DHX30 and FASTKD5. Associates with the 16S mitochondrial rRNA (16S mt-rRNA). Forms a regulatory protein-RNA complex, consisting of RCC1L, NGRN, RPUSD3, RPUSD4, TRUB2, FASTKD2 and 16S mt-rRNA.</text>
</comment>
<comment type="subcellular location">
    <subcellularLocation>
        <location evidence="1">Mitochondrion matrix</location>
    </subcellularLocation>
    <subcellularLocation>
        <location evidence="1">Mitochondrion matrix</location>
        <location evidence="1">Mitochondrion nucleoid</location>
    </subcellularLocation>
    <text evidence="1">Localizes to mitochondrial RNA granules found in close proximity to the mitochondrial nucleoids.</text>
</comment>
<comment type="tissue specificity">
    <text evidence="3 4">Ubiquitously expressed (PubMed:18771761). Expression detected in spleen, testis, colon, heart, smooth muscle, kidney, brain, lung, liver, brown and white adipose tissue with highest expression in testis, heart and smooth muscle.</text>
</comment>
<comment type="similarity">
    <text evidence="5">Belongs to the FAST kinase family.</text>
</comment>
<feature type="transit peptide" description="Mitochondrion" evidence="5">
    <location>
        <begin position="1"/>
        <end status="unknown"/>
    </location>
</feature>
<feature type="chain" id="PRO_0000050784" description="FAST kinase domain-containing protein 2, mitochondrial">
    <location>
        <begin status="unknown"/>
        <end position="689"/>
    </location>
</feature>
<feature type="domain" description="RAP" evidence="2">
    <location>
        <begin position="617"/>
        <end position="674"/>
    </location>
</feature>
<feature type="modified residue" description="Phosphoserine" evidence="1">
    <location>
        <position position="113"/>
    </location>
</feature>
<feature type="modified residue" description="Phosphoserine" evidence="1">
    <location>
        <position position="126"/>
    </location>
</feature>
<feature type="sequence conflict" description="In Ref. 1; BAE32254." evidence="5" ref="1">
    <original>G</original>
    <variation>V</variation>
    <location>
        <position position="55"/>
    </location>
</feature>
<feature type="sequence conflict" description="In Ref. 1; BAE38740." evidence="5" ref="1">
    <original>LA</original>
    <variation>FS</variation>
    <location>
        <begin position="172"/>
        <end position="173"/>
    </location>
</feature>
<feature type="sequence conflict" description="In Ref. 1; BAE38740." evidence="5" ref="1">
    <original>H</original>
    <variation>N</variation>
    <location>
        <position position="361"/>
    </location>
</feature>
<feature type="sequence conflict" description="In Ref. 1; BAE28423." evidence="5" ref="1">
    <original>A</original>
    <variation>V</variation>
    <location>
        <position position="554"/>
    </location>
</feature>
<feature type="sequence conflict" description="In Ref. 1; BAE32254." evidence="5" ref="1">
    <original>M</original>
    <variation>V</variation>
    <location>
        <position position="593"/>
    </location>
</feature>
<feature type="sequence conflict" description="In Ref. 1; BAE38740." evidence="5" ref="1">
    <original>V</original>
    <variation>I</variation>
    <location>
        <position position="606"/>
    </location>
</feature>
<sequence length="689" mass="78948">MNSKARSLLWTIRRFSTLLPRSRALRIDPLGTCRPEVIHSKWNPRNHRLNVFDEGLQPSVRYLFQDIFISKSVDGCIQTKGISHSAVFKPDRLLCPRRLSFDAKHSFVSDGTSDHDLKKINFHHTSSEDVFTKKVRPTPVNYKKLAQECNSLSDVLDTFSKAPTFPGSNYFLAMWIIAKRISEDKRRFERQLMFSHPAFNQLCEQMMREAKIMHYDHLLFSLNAIVKLGIPQNTLMVQTLLRTIQERINECDERCLSILSTALVSMEPCMNVNALRAGLRILVDQQVWNIKHVFTLQTVMKCIGKDAPSALKKKLEMKALKELGRFSILNSQHMFEVLAAMDLRSVVLLNECSKVVIDNVHGCPFKVLISILQSCRDLRYQNEDLFKSIAEYVATTFDIWKLKQVIFFLLLFETLGFRPPGLMDKLMEKVVQEPGSLNVKNIVSILHVYSSLNHVHKIHNREFLEALASALTGCLHHISSESLLNAVHSFCMMNYFPLAPINQLIKENIINELLTSGDTEKNIHKLHVLNTCLKLDESTYKSVHIPLPQLPLSASQPNEKLAEVLSRLLEGEGRFSRNVPLPHNYHIDFEIRMDTNRTQVFSFSDVDASSATNMQRVAVLCVPKSVYCLNSCHPRGLMAMKIRHLNVMGFHVILIHNWELKKLKMEDAVTFVRKKIYSDEVLPTADTTV</sequence>
<accession>Q922E6</accession>
<accession>Q3TLQ2</accession>
<accession>Q3U526</accession>
<accession>Q3UFY6</accession>
<accession>Q8BT79</accession>
<accession>Q8C3T6</accession>
<proteinExistence type="evidence at transcript level"/>
<keyword id="KW-0496">Mitochondrion</keyword>
<keyword id="KW-1135">Mitochondrion nucleoid</keyword>
<keyword id="KW-0597">Phosphoprotein</keyword>
<keyword id="KW-1185">Reference proteome</keyword>
<keyword id="KW-0690">Ribosome biogenesis</keyword>
<keyword id="KW-0694">RNA-binding</keyword>
<keyword id="KW-0699">rRNA-binding</keyword>
<keyword id="KW-0809">Transit peptide</keyword>
<protein>
    <recommendedName>
        <fullName>FAST kinase domain-containing protein 2, mitochondrial</fullName>
    </recommendedName>
</protein>
<dbReference type="EMBL" id="AK013125">
    <property type="protein sequence ID" value="BAC25392.1"/>
    <property type="molecule type" value="mRNA"/>
</dbReference>
<dbReference type="EMBL" id="AK084971">
    <property type="protein sequence ID" value="BAC39325.1"/>
    <property type="molecule type" value="mRNA"/>
</dbReference>
<dbReference type="EMBL" id="AK148224">
    <property type="protein sequence ID" value="BAE28423.1"/>
    <property type="molecule type" value="mRNA"/>
</dbReference>
<dbReference type="EMBL" id="AK153916">
    <property type="protein sequence ID" value="BAE32254.1"/>
    <property type="molecule type" value="mRNA"/>
</dbReference>
<dbReference type="EMBL" id="AK166378">
    <property type="protein sequence ID" value="BAE38740.1"/>
    <property type="molecule type" value="mRNA"/>
</dbReference>
<dbReference type="EMBL" id="BC008271">
    <property type="protein sequence ID" value="AAH08271.2"/>
    <property type="molecule type" value="mRNA"/>
</dbReference>
<dbReference type="EMBL" id="BC057208">
    <property type="protein sequence ID" value="AAH57208.1"/>
    <property type="molecule type" value="mRNA"/>
</dbReference>
<dbReference type="EMBL" id="BC080813">
    <property type="protein sequence ID" value="AAH80813.1"/>
    <property type="molecule type" value="mRNA"/>
</dbReference>
<dbReference type="CCDS" id="CCDS15001.1"/>
<dbReference type="RefSeq" id="NP_766010.1">
    <property type="nucleotide sequence ID" value="NM_172422.3"/>
</dbReference>
<dbReference type="SMR" id="Q922E6"/>
<dbReference type="BioGRID" id="217621">
    <property type="interactions" value="7"/>
</dbReference>
<dbReference type="FunCoup" id="Q922E6">
    <property type="interactions" value="2214"/>
</dbReference>
<dbReference type="STRING" id="10090.ENSMUSP00000027103"/>
<dbReference type="GlyGen" id="Q922E6">
    <property type="glycosylation" value="1 site"/>
</dbReference>
<dbReference type="iPTMnet" id="Q922E6"/>
<dbReference type="PhosphoSitePlus" id="Q922E6"/>
<dbReference type="SwissPalm" id="Q922E6"/>
<dbReference type="PaxDb" id="10090-ENSMUSP00000027103"/>
<dbReference type="PeptideAtlas" id="Q922E6"/>
<dbReference type="ProteomicsDB" id="271551"/>
<dbReference type="Pumba" id="Q922E6"/>
<dbReference type="Antibodypedia" id="34183">
    <property type="antibodies" value="231 antibodies from 25 providers"/>
</dbReference>
<dbReference type="DNASU" id="75619"/>
<dbReference type="Ensembl" id="ENSMUST00000027103.7">
    <property type="protein sequence ID" value="ENSMUSP00000027103.7"/>
    <property type="gene ID" value="ENSMUSG00000025962.16"/>
</dbReference>
<dbReference type="GeneID" id="75619"/>
<dbReference type="KEGG" id="mmu:75619"/>
<dbReference type="UCSC" id="uc007bgl.2">
    <property type="organism name" value="mouse"/>
</dbReference>
<dbReference type="AGR" id="MGI:1922869"/>
<dbReference type="CTD" id="22868"/>
<dbReference type="MGI" id="MGI:1922869">
    <property type="gene designation" value="Fastkd2"/>
</dbReference>
<dbReference type="VEuPathDB" id="HostDB:ENSMUSG00000025962"/>
<dbReference type="eggNOG" id="ENOG502QVSD">
    <property type="taxonomic scope" value="Eukaryota"/>
</dbReference>
<dbReference type="GeneTree" id="ENSGT01030000234607"/>
<dbReference type="HOGENOM" id="CLU_025270_0_0_1"/>
<dbReference type="InParanoid" id="Q922E6"/>
<dbReference type="OMA" id="FEIRMDS"/>
<dbReference type="OrthoDB" id="9369505at2759"/>
<dbReference type="PhylomeDB" id="Q922E6"/>
<dbReference type="TreeFam" id="TF352875"/>
<dbReference type="BioGRID-ORCS" id="75619">
    <property type="hits" value="1 hit in 77 CRISPR screens"/>
</dbReference>
<dbReference type="ChiTaRS" id="Fastkd2">
    <property type="organism name" value="mouse"/>
</dbReference>
<dbReference type="PRO" id="PR:Q922E6"/>
<dbReference type="Proteomes" id="UP000000589">
    <property type="component" value="Chromosome 1"/>
</dbReference>
<dbReference type="RNAct" id="Q922E6">
    <property type="molecule type" value="protein"/>
</dbReference>
<dbReference type="Bgee" id="ENSMUSG00000025962">
    <property type="expression patterns" value="Expressed in paneth cell and 260 other cell types or tissues"/>
</dbReference>
<dbReference type="GO" id="GO:0042645">
    <property type="term" value="C:mitochondrial nucleoid"/>
    <property type="evidence" value="ECO:0000250"/>
    <property type="project" value="UniProtKB"/>
</dbReference>
<dbReference type="GO" id="GO:0005739">
    <property type="term" value="C:mitochondrion"/>
    <property type="evidence" value="ECO:0007005"/>
    <property type="project" value="MGI"/>
</dbReference>
<dbReference type="GO" id="GO:0035770">
    <property type="term" value="C:ribonucleoprotein granule"/>
    <property type="evidence" value="ECO:0000250"/>
    <property type="project" value="UniProtKB"/>
</dbReference>
<dbReference type="GO" id="GO:0019843">
    <property type="term" value="F:rRNA binding"/>
    <property type="evidence" value="ECO:0000250"/>
    <property type="project" value="UniProtKB"/>
</dbReference>
<dbReference type="GO" id="GO:0006915">
    <property type="term" value="P:apoptotic process"/>
    <property type="evidence" value="ECO:0000250"/>
    <property type="project" value="UniProtKB"/>
</dbReference>
<dbReference type="GO" id="GO:1902775">
    <property type="term" value="P:mitochondrial large ribosomal subunit assembly"/>
    <property type="evidence" value="ECO:0000250"/>
    <property type="project" value="UniProtKB"/>
</dbReference>
<dbReference type="GO" id="GO:0032543">
    <property type="term" value="P:mitochondrial translation"/>
    <property type="evidence" value="ECO:0000250"/>
    <property type="project" value="UniProtKB"/>
</dbReference>
<dbReference type="GO" id="GO:0070131">
    <property type="term" value="P:positive regulation of mitochondrial translation"/>
    <property type="evidence" value="ECO:0000250"/>
    <property type="project" value="UniProtKB"/>
</dbReference>
<dbReference type="GO" id="GO:0044528">
    <property type="term" value="P:regulation of mitochondrial mRNA stability"/>
    <property type="evidence" value="ECO:0007669"/>
    <property type="project" value="InterPro"/>
</dbReference>
<dbReference type="GO" id="GO:0006396">
    <property type="term" value="P:RNA processing"/>
    <property type="evidence" value="ECO:0000250"/>
    <property type="project" value="UniProtKB"/>
</dbReference>
<dbReference type="InterPro" id="IPR050870">
    <property type="entry name" value="FAST_kinase"/>
</dbReference>
<dbReference type="InterPro" id="IPR010622">
    <property type="entry name" value="FAST_Leu-rich"/>
</dbReference>
<dbReference type="InterPro" id="IPR013584">
    <property type="entry name" value="RAP"/>
</dbReference>
<dbReference type="PANTHER" id="PTHR21228:SF1">
    <property type="entry name" value="FAST KINASE DOMAIN-CONTAINING PROTEIN 2, MITOCHONDRIAL"/>
    <property type="match status" value="1"/>
</dbReference>
<dbReference type="PANTHER" id="PTHR21228">
    <property type="entry name" value="FAST LEU-RICH DOMAIN-CONTAINING"/>
    <property type="match status" value="1"/>
</dbReference>
<dbReference type="Pfam" id="PF06743">
    <property type="entry name" value="FAST_1"/>
    <property type="match status" value="1"/>
</dbReference>
<dbReference type="Pfam" id="PF08373">
    <property type="entry name" value="RAP"/>
    <property type="match status" value="1"/>
</dbReference>
<dbReference type="SMART" id="SM00952">
    <property type="entry name" value="RAP"/>
    <property type="match status" value="1"/>
</dbReference>
<dbReference type="PROSITE" id="PS51286">
    <property type="entry name" value="RAP"/>
    <property type="match status" value="1"/>
</dbReference>
<gene>
    <name type="primary">Fastkd2</name>
</gene>
<organism>
    <name type="scientific">Mus musculus</name>
    <name type="common">Mouse</name>
    <dbReference type="NCBI Taxonomy" id="10090"/>
    <lineage>
        <taxon>Eukaryota</taxon>
        <taxon>Metazoa</taxon>
        <taxon>Chordata</taxon>
        <taxon>Craniata</taxon>
        <taxon>Vertebrata</taxon>
        <taxon>Euteleostomi</taxon>
        <taxon>Mammalia</taxon>
        <taxon>Eutheria</taxon>
        <taxon>Euarchontoglires</taxon>
        <taxon>Glires</taxon>
        <taxon>Rodentia</taxon>
        <taxon>Myomorpha</taxon>
        <taxon>Muroidea</taxon>
        <taxon>Muridae</taxon>
        <taxon>Murinae</taxon>
        <taxon>Mus</taxon>
        <taxon>Mus</taxon>
    </lineage>
</organism>
<evidence type="ECO:0000250" key="1">
    <source>
        <dbReference type="UniProtKB" id="Q9NYY8"/>
    </source>
</evidence>
<evidence type="ECO:0000255" key="2">
    <source>
        <dbReference type="PROSITE-ProRule" id="PRU00619"/>
    </source>
</evidence>
<evidence type="ECO:0000269" key="3">
    <source>
    </source>
</evidence>
<evidence type="ECO:0000269" key="4">
    <source>
    </source>
</evidence>
<evidence type="ECO:0000305" key="5"/>
<reference key="1">
    <citation type="journal article" date="2005" name="Science">
        <title>The transcriptional landscape of the mammalian genome.</title>
        <authorList>
            <person name="Carninci P."/>
            <person name="Kasukawa T."/>
            <person name="Katayama S."/>
            <person name="Gough J."/>
            <person name="Frith M.C."/>
            <person name="Maeda N."/>
            <person name="Oyama R."/>
            <person name="Ravasi T."/>
            <person name="Lenhard B."/>
            <person name="Wells C."/>
            <person name="Kodzius R."/>
            <person name="Shimokawa K."/>
            <person name="Bajic V.B."/>
            <person name="Brenner S.E."/>
            <person name="Batalov S."/>
            <person name="Forrest A.R."/>
            <person name="Zavolan M."/>
            <person name="Davis M.J."/>
            <person name="Wilming L.G."/>
            <person name="Aidinis V."/>
            <person name="Allen J.E."/>
            <person name="Ambesi-Impiombato A."/>
            <person name="Apweiler R."/>
            <person name="Aturaliya R.N."/>
            <person name="Bailey T.L."/>
            <person name="Bansal M."/>
            <person name="Baxter L."/>
            <person name="Beisel K.W."/>
            <person name="Bersano T."/>
            <person name="Bono H."/>
            <person name="Chalk A.M."/>
            <person name="Chiu K.P."/>
            <person name="Choudhary V."/>
            <person name="Christoffels A."/>
            <person name="Clutterbuck D.R."/>
            <person name="Crowe M.L."/>
            <person name="Dalla E."/>
            <person name="Dalrymple B.P."/>
            <person name="de Bono B."/>
            <person name="Della Gatta G."/>
            <person name="di Bernardo D."/>
            <person name="Down T."/>
            <person name="Engstrom P."/>
            <person name="Fagiolini M."/>
            <person name="Faulkner G."/>
            <person name="Fletcher C.F."/>
            <person name="Fukushima T."/>
            <person name="Furuno M."/>
            <person name="Futaki S."/>
            <person name="Gariboldi M."/>
            <person name="Georgii-Hemming P."/>
            <person name="Gingeras T.R."/>
            <person name="Gojobori T."/>
            <person name="Green R.E."/>
            <person name="Gustincich S."/>
            <person name="Harbers M."/>
            <person name="Hayashi Y."/>
            <person name="Hensch T.K."/>
            <person name="Hirokawa N."/>
            <person name="Hill D."/>
            <person name="Huminiecki L."/>
            <person name="Iacono M."/>
            <person name="Ikeo K."/>
            <person name="Iwama A."/>
            <person name="Ishikawa T."/>
            <person name="Jakt M."/>
            <person name="Kanapin A."/>
            <person name="Katoh M."/>
            <person name="Kawasawa Y."/>
            <person name="Kelso J."/>
            <person name="Kitamura H."/>
            <person name="Kitano H."/>
            <person name="Kollias G."/>
            <person name="Krishnan S.P."/>
            <person name="Kruger A."/>
            <person name="Kummerfeld S.K."/>
            <person name="Kurochkin I.V."/>
            <person name="Lareau L.F."/>
            <person name="Lazarevic D."/>
            <person name="Lipovich L."/>
            <person name="Liu J."/>
            <person name="Liuni S."/>
            <person name="McWilliam S."/>
            <person name="Madan Babu M."/>
            <person name="Madera M."/>
            <person name="Marchionni L."/>
            <person name="Matsuda H."/>
            <person name="Matsuzawa S."/>
            <person name="Miki H."/>
            <person name="Mignone F."/>
            <person name="Miyake S."/>
            <person name="Morris K."/>
            <person name="Mottagui-Tabar S."/>
            <person name="Mulder N."/>
            <person name="Nakano N."/>
            <person name="Nakauchi H."/>
            <person name="Ng P."/>
            <person name="Nilsson R."/>
            <person name="Nishiguchi S."/>
            <person name="Nishikawa S."/>
            <person name="Nori F."/>
            <person name="Ohara O."/>
            <person name="Okazaki Y."/>
            <person name="Orlando V."/>
            <person name="Pang K.C."/>
            <person name="Pavan W.J."/>
            <person name="Pavesi G."/>
            <person name="Pesole G."/>
            <person name="Petrovsky N."/>
            <person name="Piazza S."/>
            <person name="Reed J."/>
            <person name="Reid J.F."/>
            <person name="Ring B.Z."/>
            <person name="Ringwald M."/>
            <person name="Rost B."/>
            <person name="Ruan Y."/>
            <person name="Salzberg S.L."/>
            <person name="Sandelin A."/>
            <person name="Schneider C."/>
            <person name="Schoenbach C."/>
            <person name="Sekiguchi K."/>
            <person name="Semple C.A."/>
            <person name="Seno S."/>
            <person name="Sessa L."/>
            <person name="Sheng Y."/>
            <person name="Shibata Y."/>
            <person name="Shimada H."/>
            <person name="Shimada K."/>
            <person name="Silva D."/>
            <person name="Sinclair B."/>
            <person name="Sperling S."/>
            <person name="Stupka E."/>
            <person name="Sugiura K."/>
            <person name="Sultana R."/>
            <person name="Takenaka Y."/>
            <person name="Taki K."/>
            <person name="Tammoja K."/>
            <person name="Tan S.L."/>
            <person name="Tang S."/>
            <person name="Taylor M.S."/>
            <person name="Tegner J."/>
            <person name="Teichmann S.A."/>
            <person name="Ueda H.R."/>
            <person name="van Nimwegen E."/>
            <person name="Verardo R."/>
            <person name="Wei C.L."/>
            <person name="Yagi K."/>
            <person name="Yamanishi H."/>
            <person name="Zabarovsky E."/>
            <person name="Zhu S."/>
            <person name="Zimmer A."/>
            <person name="Hide W."/>
            <person name="Bult C."/>
            <person name="Grimmond S.M."/>
            <person name="Teasdale R.D."/>
            <person name="Liu E.T."/>
            <person name="Brusic V."/>
            <person name="Quackenbush J."/>
            <person name="Wahlestedt C."/>
            <person name="Mattick J.S."/>
            <person name="Hume D.A."/>
            <person name="Kai C."/>
            <person name="Sasaki D."/>
            <person name="Tomaru Y."/>
            <person name="Fukuda S."/>
            <person name="Kanamori-Katayama M."/>
            <person name="Suzuki M."/>
            <person name="Aoki J."/>
            <person name="Arakawa T."/>
            <person name="Iida J."/>
            <person name="Imamura K."/>
            <person name="Itoh M."/>
            <person name="Kato T."/>
            <person name="Kawaji H."/>
            <person name="Kawagashira N."/>
            <person name="Kawashima T."/>
            <person name="Kojima M."/>
            <person name="Kondo S."/>
            <person name="Konno H."/>
            <person name="Nakano K."/>
            <person name="Ninomiya N."/>
            <person name="Nishio T."/>
            <person name="Okada M."/>
            <person name="Plessy C."/>
            <person name="Shibata K."/>
            <person name="Shiraki T."/>
            <person name="Suzuki S."/>
            <person name="Tagami M."/>
            <person name="Waki K."/>
            <person name="Watahiki A."/>
            <person name="Okamura-Oho Y."/>
            <person name="Suzuki H."/>
            <person name="Kawai J."/>
            <person name="Hayashizaki Y."/>
        </authorList>
    </citation>
    <scope>NUCLEOTIDE SEQUENCE [LARGE SCALE MRNA]</scope>
    <source>
        <strain>C57BL/6J</strain>
        <strain>NOD</strain>
        <tissue>Embryo</tissue>
        <tissue>Fetal lung</tissue>
        <tissue>Mammary gland</tissue>
        <tissue>Thymus</tissue>
    </source>
</reference>
<reference key="2">
    <citation type="journal article" date="2004" name="Genome Res.">
        <title>The status, quality, and expansion of the NIH full-length cDNA project: the Mammalian Gene Collection (MGC).</title>
        <authorList>
            <consortium name="The MGC Project Team"/>
        </authorList>
    </citation>
    <scope>NUCLEOTIDE SEQUENCE [LARGE SCALE MRNA]</scope>
    <source>
        <strain>FVB/N</strain>
        <strain>NMRI</strain>
        <tissue>Embryo</tissue>
        <tissue>Mammary tumor</tissue>
    </source>
</reference>
<reference key="3">
    <citation type="journal article" date="2008" name="Am. J. Hum. Genet.">
        <title>FASTKD2 nonsense mutation in an infantile mitochondrial encephalomyopathy associated with cytochrome c oxidase deficiency.</title>
        <authorList>
            <person name="Ghezzi D."/>
            <person name="Saada A."/>
            <person name="D'Adamo P."/>
            <person name="Fernandez-Vizarra E."/>
            <person name="Gasparini P."/>
            <person name="Tiranti V."/>
            <person name="Elpeleg O."/>
            <person name="Zeviani M."/>
        </authorList>
    </citation>
    <scope>TISSUE SPECIFICITY</scope>
</reference>
<reference key="4">
    <citation type="journal article" date="2010" name="Biochem. Biophys. Res. Commun.">
        <title>Fast kinase domain-containing protein 3 is a mitochondrial protein essential for cellular respiration.</title>
        <authorList>
            <person name="Simarro M."/>
            <person name="Gimenez-Cassina A."/>
            <person name="Kedersha N."/>
            <person name="Lazaro J.B."/>
            <person name="Adelmant G.O."/>
            <person name="Marto J.A."/>
            <person name="Rhee K."/>
            <person name="Tisdale S."/>
            <person name="Danial N."/>
            <person name="Benarafa C."/>
            <person name="Orduna A."/>
            <person name="Anderson P."/>
        </authorList>
    </citation>
    <scope>TISSUE SPECIFICITY</scope>
</reference>